<gene>
    <name type="ordered locus">lhv_0124</name>
</gene>
<protein>
    <recommendedName>
        <fullName evidence="1">Putative 3-methyladenine DNA glycosylase</fullName>
        <ecNumber evidence="1">3.2.2.-</ecNumber>
    </recommendedName>
</protein>
<proteinExistence type="inferred from homology"/>
<dbReference type="EC" id="3.2.2.-" evidence="1"/>
<dbReference type="EMBL" id="CP000517">
    <property type="protein sequence ID" value="ABX26388.1"/>
    <property type="molecule type" value="Genomic_DNA"/>
</dbReference>
<dbReference type="RefSeq" id="WP_012211263.1">
    <property type="nucleotide sequence ID" value="NC_010080.1"/>
</dbReference>
<dbReference type="SMR" id="A8YWM6"/>
<dbReference type="KEGG" id="lhe:lhv_0124"/>
<dbReference type="eggNOG" id="COG2094">
    <property type="taxonomic scope" value="Bacteria"/>
</dbReference>
<dbReference type="HOGENOM" id="CLU_060471_2_0_9"/>
<dbReference type="Proteomes" id="UP000000790">
    <property type="component" value="Chromosome"/>
</dbReference>
<dbReference type="GO" id="GO:0003905">
    <property type="term" value="F:alkylbase DNA N-glycosylase activity"/>
    <property type="evidence" value="ECO:0007669"/>
    <property type="project" value="InterPro"/>
</dbReference>
<dbReference type="GO" id="GO:0003677">
    <property type="term" value="F:DNA binding"/>
    <property type="evidence" value="ECO:0007669"/>
    <property type="project" value="InterPro"/>
</dbReference>
<dbReference type="GO" id="GO:0006284">
    <property type="term" value="P:base-excision repair"/>
    <property type="evidence" value="ECO:0007669"/>
    <property type="project" value="InterPro"/>
</dbReference>
<dbReference type="CDD" id="cd00540">
    <property type="entry name" value="AAG"/>
    <property type="match status" value="1"/>
</dbReference>
<dbReference type="Gene3D" id="3.10.300.10">
    <property type="entry name" value="Methylpurine-DNA glycosylase (MPG)"/>
    <property type="match status" value="1"/>
</dbReference>
<dbReference type="HAMAP" id="MF_00527">
    <property type="entry name" value="3MGH"/>
    <property type="match status" value="1"/>
</dbReference>
<dbReference type="InterPro" id="IPR011034">
    <property type="entry name" value="Formyl_transferase-like_C_sf"/>
</dbReference>
<dbReference type="InterPro" id="IPR003180">
    <property type="entry name" value="MPG"/>
</dbReference>
<dbReference type="InterPro" id="IPR036995">
    <property type="entry name" value="MPG_sf"/>
</dbReference>
<dbReference type="NCBIfam" id="TIGR00567">
    <property type="entry name" value="3mg"/>
    <property type="match status" value="1"/>
</dbReference>
<dbReference type="PANTHER" id="PTHR10429">
    <property type="entry name" value="DNA-3-METHYLADENINE GLYCOSYLASE"/>
    <property type="match status" value="1"/>
</dbReference>
<dbReference type="PANTHER" id="PTHR10429:SF0">
    <property type="entry name" value="DNA-3-METHYLADENINE GLYCOSYLASE"/>
    <property type="match status" value="1"/>
</dbReference>
<dbReference type="Pfam" id="PF02245">
    <property type="entry name" value="Pur_DNA_glyco"/>
    <property type="match status" value="1"/>
</dbReference>
<dbReference type="SUPFAM" id="SSF50486">
    <property type="entry name" value="FMT C-terminal domain-like"/>
    <property type="match status" value="1"/>
</dbReference>
<keyword id="KW-0227">DNA damage</keyword>
<keyword id="KW-0234">DNA repair</keyword>
<keyword id="KW-0378">Hydrolase</keyword>
<organism>
    <name type="scientific">Lactobacillus helveticus (strain DPC 4571)</name>
    <dbReference type="NCBI Taxonomy" id="405566"/>
    <lineage>
        <taxon>Bacteria</taxon>
        <taxon>Bacillati</taxon>
        <taxon>Bacillota</taxon>
        <taxon>Bacilli</taxon>
        <taxon>Lactobacillales</taxon>
        <taxon>Lactobacillaceae</taxon>
        <taxon>Lactobacillus</taxon>
    </lineage>
</organism>
<evidence type="ECO:0000255" key="1">
    <source>
        <dbReference type="HAMAP-Rule" id="MF_00527"/>
    </source>
</evidence>
<accession>A8YWM6</accession>
<name>3MGH_LACH4</name>
<feature type="chain" id="PRO_1000072494" description="Putative 3-methyladenine DNA glycosylase">
    <location>
        <begin position="1"/>
        <end position="210"/>
    </location>
</feature>
<reference key="1">
    <citation type="journal article" date="2008" name="J. Bacteriol.">
        <title>Genome sequence of Lactobacillus helveticus: an organism distinguished by selective gene loss and IS element expansion.</title>
        <authorList>
            <person name="Callanan M."/>
            <person name="Kaleta P."/>
            <person name="O'Callaghan J."/>
            <person name="O'Sullivan O."/>
            <person name="Jordan K."/>
            <person name="McAuliffe O."/>
            <person name="Sangrador-Vegas A."/>
            <person name="Slattery L."/>
            <person name="Fitzgerald G.F."/>
            <person name="Beresford T."/>
            <person name="Ross R.P."/>
        </authorList>
    </citation>
    <scope>NUCLEOTIDE SEQUENCE [LARGE SCALE GENOMIC DNA]</scope>
    <source>
        <strain>DPC 4571</strain>
    </source>
</reference>
<comment type="similarity">
    <text evidence="1">Belongs to the DNA glycosylase MPG family.</text>
</comment>
<sequence length="210" mass="24079">MNYSDYFTNRPTDEITRDLVGRPLIYDNGKEKIGGYIVEAEAYMGKNDRTAHSYGGHRSPANEGLYRRGGTIYIYAQRQYFFFDVACQEENEPQGVLIRAIEPIWGIDTMIKNRSGKSGVLLTNGPAKMMQAFGIHDKNWNLHFLSDSPFKIDLEDDHRKPAQEIIADKRVGINQSDPVWANKKLRYYVAGNPYVSDMKKRNYAKNNGWA</sequence>